<sequence>MAQFFKPKKKASVNTKHLSVDVVRLDHNSAGIAFVDKKPVFIEGALPEEQAIIQFIEQKKQYSRAKLIKLTKKSSKRQAPICQHYDDCGGCNLQHLQHAEQIIAKNDKLQELMKKQGVDACDVAEPILANEHDYRRRARISLIMNKQTNQLDFGFRKKQSKEIVNVRHCPVLVKELDQHLESLYTLLNQLKGKRHLGHVELVQADNGSVLLIRHVAAFNEKDQQALLHYCEERDLILYLMPESDVLNHVYGEEPYYVIDEVKIYFTPKDFIQVNASINDSMVNQALTWLDLNADDCVLDLFCGLGNFSLPLAQKVKTVVGIEGVEEMVKRAQSNAKRNELDNVTFYQANLEEPIDQQVWASTKFTKILLDPARAGAAGVMQTVAKLKPETVVYVSCNPATLARDSQLLIQRGYKLTRLGMLDMFPHTGHLESMALFER</sequence>
<protein>
    <recommendedName>
        <fullName evidence="1">23S rRNA (uracil(1939)-C(5))-methyltransferase RlmD</fullName>
        <ecNumber evidence="1">2.1.1.190</ecNumber>
    </recommendedName>
    <alternativeName>
        <fullName evidence="1">23S rRNA(m5U1939)-methyltransferase</fullName>
    </alternativeName>
</protein>
<gene>
    <name evidence="1" type="primary">rlmD</name>
    <name type="synonym">rumA</name>
    <name type="ordered locus">VSAL_I2519</name>
</gene>
<dbReference type="EC" id="2.1.1.190" evidence="1"/>
<dbReference type="EMBL" id="FM178379">
    <property type="protein sequence ID" value="CAQ80203.1"/>
    <property type="molecule type" value="Genomic_DNA"/>
</dbReference>
<dbReference type="RefSeq" id="WP_012550991.1">
    <property type="nucleotide sequence ID" value="NC_011312.1"/>
</dbReference>
<dbReference type="SMR" id="B6EKM3"/>
<dbReference type="KEGG" id="vsa:VSAL_I2519"/>
<dbReference type="eggNOG" id="COG2265">
    <property type="taxonomic scope" value="Bacteria"/>
</dbReference>
<dbReference type="HOGENOM" id="CLU_014689_8_2_6"/>
<dbReference type="Proteomes" id="UP000001730">
    <property type="component" value="Chromosome 1"/>
</dbReference>
<dbReference type="GO" id="GO:0051539">
    <property type="term" value="F:4 iron, 4 sulfur cluster binding"/>
    <property type="evidence" value="ECO:0007669"/>
    <property type="project" value="UniProtKB-KW"/>
</dbReference>
<dbReference type="GO" id="GO:0005506">
    <property type="term" value="F:iron ion binding"/>
    <property type="evidence" value="ECO:0007669"/>
    <property type="project" value="UniProtKB-UniRule"/>
</dbReference>
<dbReference type="GO" id="GO:0003723">
    <property type="term" value="F:RNA binding"/>
    <property type="evidence" value="ECO:0007669"/>
    <property type="project" value="InterPro"/>
</dbReference>
<dbReference type="GO" id="GO:0070041">
    <property type="term" value="F:rRNA (uridine-C5-)-methyltransferase activity"/>
    <property type="evidence" value="ECO:0007669"/>
    <property type="project" value="UniProtKB-UniRule"/>
</dbReference>
<dbReference type="GO" id="GO:0070475">
    <property type="term" value="P:rRNA base methylation"/>
    <property type="evidence" value="ECO:0007669"/>
    <property type="project" value="TreeGrafter"/>
</dbReference>
<dbReference type="CDD" id="cd02440">
    <property type="entry name" value="AdoMet_MTases"/>
    <property type="match status" value="1"/>
</dbReference>
<dbReference type="FunFam" id="3.40.50.150:FF:000009">
    <property type="entry name" value="23S rRNA (Uracil(1939)-C(5))-methyltransferase RlmD"/>
    <property type="match status" value="1"/>
</dbReference>
<dbReference type="FunFam" id="2.40.50.140:FF:000097">
    <property type="entry name" value="23S rRNA (uracil(1939)-C(5))-methyltransferase RlmD"/>
    <property type="match status" value="1"/>
</dbReference>
<dbReference type="Gene3D" id="2.40.50.1070">
    <property type="match status" value="1"/>
</dbReference>
<dbReference type="Gene3D" id="2.40.50.140">
    <property type="entry name" value="Nucleic acid-binding proteins"/>
    <property type="match status" value="1"/>
</dbReference>
<dbReference type="Gene3D" id="3.40.50.150">
    <property type="entry name" value="Vaccinia Virus protein VP39"/>
    <property type="match status" value="1"/>
</dbReference>
<dbReference type="HAMAP" id="MF_01010">
    <property type="entry name" value="23SrRNA_methyltr_RlmD"/>
    <property type="match status" value="1"/>
</dbReference>
<dbReference type="InterPro" id="IPR001566">
    <property type="entry name" value="23S_rRNA_MeTrfase_RlmD"/>
</dbReference>
<dbReference type="InterPro" id="IPR030390">
    <property type="entry name" value="MeTrfase_TrmA_AS"/>
</dbReference>
<dbReference type="InterPro" id="IPR030391">
    <property type="entry name" value="MeTrfase_TrmA_CS"/>
</dbReference>
<dbReference type="InterPro" id="IPR012340">
    <property type="entry name" value="NA-bd_OB-fold"/>
</dbReference>
<dbReference type="InterPro" id="IPR029063">
    <property type="entry name" value="SAM-dependent_MTases_sf"/>
</dbReference>
<dbReference type="InterPro" id="IPR002792">
    <property type="entry name" value="TRAM_dom"/>
</dbReference>
<dbReference type="InterPro" id="IPR010280">
    <property type="entry name" value="U5_MeTrfase_fam"/>
</dbReference>
<dbReference type="NCBIfam" id="NF009639">
    <property type="entry name" value="PRK13168.1"/>
    <property type="match status" value="1"/>
</dbReference>
<dbReference type="NCBIfam" id="TIGR00479">
    <property type="entry name" value="rumA"/>
    <property type="match status" value="1"/>
</dbReference>
<dbReference type="PANTHER" id="PTHR11061:SF49">
    <property type="entry name" value="23S RRNA (URACIL(1939)-C(5))-METHYLTRANSFERASE RLMD"/>
    <property type="match status" value="1"/>
</dbReference>
<dbReference type="PANTHER" id="PTHR11061">
    <property type="entry name" value="RNA M5U METHYLTRANSFERASE"/>
    <property type="match status" value="1"/>
</dbReference>
<dbReference type="Pfam" id="PF01938">
    <property type="entry name" value="TRAM"/>
    <property type="match status" value="1"/>
</dbReference>
<dbReference type="Pfam" id="PF05958">
    <property type="entry name" value="tRNA_U5-meth_tr"/>
    <property type="match status" value="1"/>
</dbReference>
<dbReference type="SUPFAM" id="SSF50249">
    <property type="entry name" value="Nucleic acid-binding proteins"/>
    <property type="match status" value="1"/>
</dbReference>
<dbReference type="SUPFAM" id="SSF53335">
    <property type="entry name" value="S-adenosyl-L-methionine-dependent methyltransferases"/>
    <property type="match status" value="1"/>
</dbReference>
<dbReference type="PROSITE" id="PS51687">
    <property type="entry name" value="SAM_MT_RNA_M5U"/>
    <property type="match status" value="1"/>
</dbReference>
<dbReference type="PROSITE" id="PS01230">
    <property type="entry name" value="TRMA_1"/>
    <property type="match status" value="1"/>
</dbReference>
<dbReference type="PROSITE" id="PS01231">
    <property type="entry name" value="TRMA_2"/>
    <property type="match status" value="1"/>
</dbReference>
<feature type="chain" id="PRO_1000200839" description="23S rRNA (uracil(1939)-C(5))-methyltransferase RlmD">
    <location>
        <begin position="1"/>
        <end position="438"/>
    </location>
</feature>
<feature type="domain" description="TRAM" evidence="1">
    <location>
        <begin position="10"/>
        <end position="69"/>
    </location>
</feature>
<feature type="active site" description="Nucleophile" evidence="1">
    <location>
        <position position="396"/>
    </location>
</feature>
<feature type="binding site" evidence="1">
    <location>
        <position position="82"/>
    </location>
    <ligand>
        <name>[4Fe-4S] cluster</name>
        <dbReference type="ChEBI" id="CHEBI:49883"/>
    </ligand>
</feature>
<feature type="binding site" evidence="1">
    <location>
        <position position="88"/>
    </location>
    <ligand>
        <name>[4Fe-4S] cluster</name>
        <dbReference type="ChEBI" id="CHEBI:49883"/>
    </ligand>
</feature>
<feature type="binding site" evidence="1">
    <location>
        <position position="91"/>
    </location>
    <ligand>
        <name>[4Fe-4S] cluster</name>
        <dbReference type="ChEBI" id="CHEBI:49883"/>
    </ligand>
</feature>
<feature type="binding site" evidence="1">
    <location>
        <position position="169"/>
    </location>
    <ligand>
        <name>[4Fe-4S] cluster</name>
        <dbReference type="ChEBI" id="CHEBI:49883"/>
    </ligand>
</feature>
<feature type="binding site" evidence="1">
    <location>
        <position position="272"/>
    </location>
    <ligand>
        <name>S-adenosyl-L-methionine</name>
        <dbReference type="ChEBI" id="CHEBI:59789"/>
    </ligand>
</feature>
<feature type="binding site" evidence="1">
    <location>
        <position position="301"/>
    </location>
    <ligand>
        <name>S-adenosyl-L-methionine</name>
        <dbReference type="ChEBI" id="CHEBI:59789"/>
    </ligand>
</feature>
<feature type="binding site" evidence="1">
    <location>
        <position position="306"/>
    </location>
    <ligand>
        <name>S-adenosyl-L-methionine</name>
        <dbReference type="ChEBI" id="CHEBI:59789"/>
    </ligand>
</feature>
<feature type="binding site" evidence="1">
    <location>
        <position position="322"/>
    </location>
    <ligand>
        <name>S-adenosyl-L-methionine</name>
        <dbReference type="ChEBI" id="CHEBI:59789"/>
    </ligand>
</feature>
<feature type="binding site" evidence="1">
    <location>
        <position position="349"/>
    </location>
    <ligand>
        <name>S-adenosyl-L-methionine</name>
        <dbReference type="ChEBI" id="CHEBI:59789"/>
    </ligand>
</feature>
<feature type="binding site" evidence="1">
    <location>
        <position position="370"/>
    </location>
    <ligand>
        <name>S-adenosyl-L-methionine</name>
        <dbReference type="ChEBI" id="CHEBI:59789"/>
    </ligand>
</feature>
<name>RLMD_ALISL</name>
<keyword id="KW-0004">4Fe-4S</keyword>
<keyword id="KW-0408">Iron</keyword>
<keyword id="KW-0411">Iron-sulfur</keyword>
<keyword id="KW-0479">Metal-binding</keyword>
<keyword id="KW-0489">Methyltransferase</keyword>
<keyword id="KW-0698">rRNA processing</keyword>
<keyword id="KW-0949">S-adenosyl-L-methionine</keyword>
<keyword id="KW-0808">Transferase</keyword>
<organism>
    <name type="scientific">Aliivibrio salmonicida (strain LFI1238)</name>
    <name type="common">Vibrio salmonicida (strain LFI1238)</name>
    <dbReference type="NCBI Taxonomy" id="316275"/>
    <lineage>
        <taxon>Bacteria</taxon>
        <taxon>Pseudomonadati</taxon>
        <taxon>Pseudomonadota</taxon>
        <taxon>Gammaproteobacteria</taxon>
        <taxon>Vibrionales</taxon>
        <taxon>Vibrionaceae</taxon>
        <taxon>Aliivibrio</taxon>
    </lineage>
</organism>
<evidence type="ECO:0000255" key="1">
    <source>
        <dbReference type="HAMAP-Rule" id="MF_01010"/>
    </source>
</evidence>
<proteinExistence type="inferred from homology"/>
<accession>B6EKM3</accession>
<reference key="1">
    <citation type="journal article" date="2008" name="BMC Genomics">
        <title>The genome sequence of the fish pathogen Aliivibrio salmonicida strain LFI1238 shows extensive evidence of gene decay.</title>
        <authorList>
            <person name="Hjerde E."/>
            <person name="Lorentzen M.S."/>
            <person name="Holden M.T."/>
            <person name="Seeger K."/>
            <person name="Paulsen S."/>
            <person name="Bason N."/>
            <person name="Churcher C."/>
            <person name="Harris D."/>
            <person name="Norbertczak H."/>
            <person name="Quail M.A."/>
            <person name="Sanders S."/>
            <person name="Thurston S."/>
            <person name="Parkhill J."/>
            <person name="Willassen N.P."/>
            <person name="Thomson N.R."/>
        </authorList>
    </citation>
    <scope>NUCLEOTIDE SEQUENCE [LARGE SCALE GENOMIC DNA]</scope>
    <source>
        <strain>LFI1238</strain>
    </source>
</reference>
<comment type="function">
    <text evidence="1">Catalyzes the formation of 5-methyl-uridine at position 1939 (m5U1939) in 23S rRNA.</text>
</comment>
<comment type="catalytic activity">
    <reaction evidence="1">
        <text>uridine(1939) in 23S rRNA + S-adenosyl-L-methionine = 5-methyluridine(1939) in 23S rRNA + S-adenosyl-L-homocysteine + H(+)</text>
        <dbReference type="Rhea" id="RHEA:42908"/>
        <dbReference type="Rhea" id="RHEA-COMP:10278"/>
        <dbReference type="Rhea" id="RHEA-COMP:10279"/>
        <dbReference type="ChEBI" id="CHEBI:15378"/>
        <dbReference type="ChEBI" id="CHEBI:57856"/>
        <dbReference type="ChEBI" id="CHEBI:59789"/>
        <dbReference type="ChEBI" id="CHEBI:65315"/>
        <dbReference type="ChEBI" id="CHEBI:74447"/>
        <dbReference type="EC" id="2.1.1.190"/>
    </reaction>
</comment>
<comment type="similarity">
    <text evidence="1">Belongs to the class I-like SAM-binding methyltransferase superfamily. RNA M5U methyltransferase family. RlmD subfamily.</text>
</comment>